<organism>
    <name type="scientific">Sodalis glossinidius (strain morsitans)</name>
    <dbReference type="NCBI Taxonomy" id="343509"/>
    <lineage>
        <taxon>Bacteria</taxon>
        <taxon>Pseudomonadati</taxon>
        <taxon>Pseudomonadota</taxon>
        <taxon>Gammaproteobacteria</taxon>
        <taxon>Enterobacterales</taxon>
        <taxon>Bruguierivoracaceae</taxon>
        <taxon>Sodalis</taxon>
    </lineage>
</organism>
<feature type="chain" id="PRO_1000007612" description="Large ribosomal subunit protein uL29">
    <location>
        <begin position="1"/>
        <end position="63"/>
    </location>
</feature>
<comment type="similarity">
    <text evidence="1">Belongs to the universal ribosomal protein uL29 family.</text>
</comment>
<sequence>MKANELREKSAEELNTELLNLLREQFNLRMQASSGQLQQTHLLKQVRRNVARVKTLLTEKAGA</sequence>
<protein>
    <recommendedName>
        <fullName evidence="1">Large ribosomal subunit protein uL29</fullName>
    </recommendedName>
    <alternativeName>
        <fullName evidence="2">50S ribosomal protein L29</fullName>
    </alternativeName>
</protein>
<keyword id="KW-0687">Ribonucleoprotein</keyword>
<keyword id="KW-0689">Ribosomal protein</keyword>
<gene>
    <name evidence="1" type="primary">rpmC</name>
    <name type="ordered locus">SG2270</name>
</gene>
<reference key="1">
    <citation type="journal article" date="2006" name="Genome Res.">
        <title>Massive genome erosion and functional adaptations provide insights into the symbiotic lifestyle of Sodalis glossinidius in the tsetse host.</title>
        <authorList>
            <person name="Toh H."/>
            <person name="Weiss B.L."/>
            <person name="Perkin S.A.H."/>
            <person name="Yamashita A."/>
            <person name="Oshima K."/>
            <person name="Hattori M."/>
            <person name="Aksoy S."/>
        </authorList>
    </citation>
    <scope>NUCLEOTIDE SEQUENCE [LARGE SCALE GENOMIC DNA]</scope>
    <source>
        <strain>morsitans</strain>
    </source>
</reference>
<proteinExistence type="inferred from homology"/>
<accession>Q2NQN0</accession>
<dbReference type="EMBL" id="AP008232">
    <property type="protein sequence ID" value="BAE75545.1"/>
    <property type="molecule type" value="Genomic_DNA"/>
</dbReference>
<dbReference type="RefSeq" id="WP_011412080.1">
    <property type="nucleotide sequence ID" value="NC_007712.1"/>
</dbReference>
<dbReference type="SMR" id="Q2NQN0"/>
<dbReference type="STRING" id="343509.SG2270"/>
<dbReference type="KEGG" id="sgl:SG2270"/>
<dbReference type="eggNOG" id="COG0255">
    <property type="taxonomic scope" value="Bacteria"/>
</dbReference>
<dbReference type="HOGENOM" id="CLU_158491_1_2_6"/>
<dbReference type="OrthoDB" id="9815192at2"/>
<dbReference type="BioCyc" id="SGLO343509:SGP1_RS20800-MONOMER"/>
<dbReference type="Proteomes" id="UP000001932">
    <property type="component" value="Chromosome"/>
</dbReference>
<dbReference type="GO" id="GO:0022625">
    <property type="term" value="C:cytosolic large ribosomal subunit"/>
    <property type="evidence" value="ECO:0007669"/>
    <property type="project" value="TreeGrafter"/>
</dbReference>
<dbReference type="GO" id="GO:0003735">
    <property type="term" value="F:structural constituent of ribosome"/>
    <property type="evidence" value="ECO:0007669"/>
    <property type="project" value="InterPro"/>
</dbReference>
<dbReference type="GO" id="GO:0006412">
    <property type="term" value="P:translation"/>
    <property type="evidence" value="ECO:0007669"/>
    <property type="project" value="UniProtKB-UniRule"/>
</dbReference>
<dbReference type="CDD" id="cd00427">
    <property type="entry name" value="Ribosomal_L29_HIP"/>
    <property type="match status" value="1"/>
</dbReference>
<dbReference type="Gene3D" id="6.10.140.1970">
    <property type="match status" value="1"/>
</dbReference>
<dbReference type="HAMAP" id="MF_00374">
    <property type="entry name" value="Ribosomal_uL29"/>
    <property type="match status" value="1"/>
</dbReference>
<dbReference type="InterPro" id="IPR050063">
    <property type="entry name" value="Ribosomal_protein_uL29"/>
</dbReference>
<dbReference type="InterPro" id="IPR001854">
    <property type="entry name" value="Ribosomal_uL29"/>
</dbReference>
<dbReference type="InterPro" id="IPR018254">
    <property type="entry name" value="Ribosomal_uL29_CS"/>
</dbReference>
<dbReference type="InterPro" id="IPR036049">
    <property type="entry name" value="Ribosomal_uL29_sf"/>
</dbReference>
<dbReference type="NCBIfam" id="TIGR00012">
    <property type="entry name" value="L29"/>
    <property type="match status" value="1"/>
</dbReference>
<dbReference type="PANTHER" id="PTHR10916">
    <property type="entry name" value="60S RIBOSOMAL PROTEIN L35/50S RIBOSOMAL PROTEIN L29"/>
    <property type="match status" value="1"/>
</dbReference>
<dbReference type="PANTHER" id="PTHR10916:SF0">
    <property type="entry name" value="LARGE RIBOSOMAL SUBUNIT PROTEIN UL29C"/>
    <property type="match status" value="1"/>
</dbReference>
<dbReference type="Pfam" id="PF00831">
    <property type="entry name" value="Ribosomal_L29"/>
    <property type="match status" value="1"/>
</dbReference>
<dbReference type="SUPFAM" id="SSF46561">
    <property type="entry name" value="Ribosomal protein L29 (L29p)"/>
    <property type="match status" value="1"/>
</dbReference>
<dbReference type="PROSITE" id="PS00579">
    <property type="entry name" value="RIBOSOMAL_L29"/>
    <property type="match status" value="1"/>
</dbReference>
<name>RL29_SODGM</name>
<evidence type="ECO:0000255" key="1">
    <source>
        <dbReference type="HAMAP-Rule" id="MF_00374"/>
    </source>
</evidence>
<evidence type="ECO:0000305" key="2"/>